<sequence>MGADARPLGVRAGGGGRGAARPGTSSRALPPPLPPLSFLLLLLAAPGARAAGYETCPMVHPDMLNVHLVAHTHDDVGWLKTVDQYFYGIHNDVQHAGVQYILDSVISSLLVEPTRRFIYVEIAFFSRWWHQQTNATQEVVRDLVRQGRLEFANGGWVMNDEAATHYGAIIDQMTLGLRFLEDTFGKDGRPRVAWHIDPFGHSREQASLFAQMGFDGLFFGRLDYQDKRVREENLGLEQVWRASASLKPPAADLFTSVLPNIYNPPEKLCWDTLCADKPFVEDRRSPEYNAEELVNYFLQLATAQGQHFRTNHTIMTMGSDFQYENANMWFRNLDRLIQLVNAQQQANGSRVNVLYSTPACYLWELNKANLTWSVKQDDFFPYADGPHQFWSGYFSSRPALKRYERLSYNFLQVCNQLEALAGPAANVGPYGSGDSAPLNQAMAVLQHHDAVSGTSKQHVADDYARQLAAGWDPCEVLLSNALARLSGSKEDFTYCRNLNVSVCPLSQTAKNFQVTIYNPLGRKIDWMVRLPVSKHGFVVRDPNGTVVPSDVVILPSSDGQELLFPASVPALGFSIYSVSQVPGQRPHAHKPQPRSQRPWSRVLAIQNEHIRARFDPDTGLLVEMENLDQNLLLPVRQAFYWYNASVGNNLSTQVSGAYIFRPNQEKPLMVSHWAQTRLVKTPLVQEVHQNFSAWCSQVVRLYRGQRHLELEWTVGPIPVGDGWGKEIISRFDTVLETKGLFYTDSNGREILERRRDYRPTWKLNQTETVAGNYYPVNSRIYIRDGNMQLTVLTDRSQGGSSLRDGSMELMVHRRLLKDDGRGVGEALLEDGLGRWVRGRHLVLLDKVRTAATGHRLQAEKEVLTPQVVLAPGGGAPYHLKVAPRKQFSGLRRELPPSVHLLTLARWDQKTLLLRLEHQFAVGEDSGNLSSPVTLDLTDLFSAFTITYLQETTLVANQLRASASRLKWTPNTGPTPLPSPSRLDPATITLQPMEIRTFLASVQWEEHG</sequence>
<evidence type="ECO:0000250" key="1"/>
<evidence type="ECO:0000255" key="2"/>
<evidence type="ECO:0000256" key="3">
    <source>
        <dbReference type="SAM" id="MobiDB-lite"/>
    </source>
</evidence>
<evidence type="ECO:0000269" key="4">
    <source>
    </source>
</evidence>
<evidence type="ECO:0000305" key="5"/>
<keyword id="KW-1015">Disulfide bond</keyword>
<keyword id="KW-0325">Glycoprotein</keyword>
<keyword id="KW-0326">Glycosidase</keyword>
<keyword id="KW-0378">Hydrolase</keyword>
<keyword id="KW-0458">Lysosome</keyword>
<keyword id="KW-0479">Metal-binding</keyword>
<keyword id="KW-1185">Reference proteome</keyword>
<keyword id="KW-0732">Signal</keyword>
<keyword id="KW-0862">Zinc</keyword>
<feature type="signal peptide" evidence="1">
    <location>
        <begin position="1"/>
        <end position="50"/>
    </location>
</feature>
<feature type="chain" id="PRO_0000012068" description="Lysosomal alpha-mannosidase">
    <location>
        <begin position="51"/>
        <end position="1007"/>
    </location>
</feature>
<feature type="region of interest" description="Disordered" evidence="3">
    <location>
        <begin position="1"/>
        <end position="30"/>
    </location>
</feature>
<feature type="compositionally biased region" description="Low complexity" evidence="3">
    <location>
        <begin position="1"/>
        <end position="10"/>
    </location>
</feature>
<feature type="compositionally biased region" description="Low complexity" evidence="3">
    <location>
        <begin position="19"/>
        <end position="28"/>
    </location>
</feature>
<feature type="active site" description="Nucleophile" evidence="1">
    <location>
        <position position="197"/>
    </location>
</feature>
<feature type="binding site" evidence="1">
    <location>
        <position position="73"/>
    </location>
    <ligand>
        <name>Zn(2+)</name>
        <dbReference type="ChEBI" id="CHEBI:29105"/>
    </ligand>
</feature>
<feature type="binding site" evidence="1">
    <location>
        <position position="75"/>
    </location>
    <ligand>
        <name>Zn(2+)</name>
        <dbReference type="ChEBI" id="CHEBI:29105"/>
    </ligand>
</feature>
<feature type="binding site" evidence="1">
    <location>
        <position position="197"/>
    </location>
    <ligand>
        <name>Zn(2+)</name>
        <dbReference type="ChEBI" id="CHEBI:29105"/>
    </ligand>
</feature>
<feature type="binding site" evidence="1">
    <location>
        <position position="448"/>
    </location>
    <ligand>
        <name>Zn(2+)</name>
        <dbReference type="ChEBI" id="CHEBI:29105"/>
    </ligand>
</feature>
<feature type="glycosylation site" description="N-linked (GlcNAc...) asparagine" evidence="2">
    <location>
        <position position="134"/>
    </location>
</feature>
<feature type="glycosylation site" description="N-linked (GlcNAc...) asparagine" evidence="2">
    <location>
        <position position="311"/>
    </location>
</feature>
<feature type="glycosylation site" description="N-linked (GlcNAc...) asparagine" evidence="2">
    <location>
        <position position="347"/>
    </location>
</feature>
<feature type="glycosylation site" description="N-linked (GlcNAc...) asparagine" evidence="2">
    <location>
        <position position="369"/>
    </location>
</feature>
<feature type="glycosylation site" description="N-linked (GlcNAc...) asparagine" evidence="2">
    <location>
        <position position="499"/>
    </location>
</feature>
<feature type="glycosylation site" description="N-linked (GlcNAc...) asparagine" evidence="2">
    <location>
        <position position="543"/>
    </location>
</feature>
<feature type="glycosylation site" description="N-linked (GlcNAc...) asparagine" evidence="2">
    <location>
        <position position="643"/>
    </location>
</feature>
<feature type="glycosylation site" description="N-linked (GlcNAc...) asparagine" evidence="2">
    <location>
        <position position="649"/>
    </location>
</feature>
<feature type="glycosylation site" description="N-linked (GlcNAc...) asparagine" evidence="2">
    <location>
        <position position="690"/>
    </location>
</feature>
<feature type="glycosylation site" description="N-linked (GlcNAc...) asparagine" evidence="2">
    <location>
        <position position="764"/>
    </location>
</feature>
<feature type="glycosylation site" description="N-linked (GlcNAc...) asparagine" evidence="2">
    <location>
        <position position="927"/>
    </location>
</feature>
<feature type="disulfide bond" evidence="1">
    <location>
        <begin position="56"/>
        <end position="360"/>
    </location>
</feature>
<feature type="disulfide bond" evidence="1">
    <location>
        <begin position="269"/>
        <end position="274"/>
    </location>
</feature>
<feature type="disulfide bond" evidence="1">
    <location>
        <begin position="414"/>
        <end position="474"/>
    </location>
</feature>
<feature type="disulfide bond" evidence="1">
    <location>
        <begin position="495"/>
        <end position="503"/>
    </location>
</feature>
<name>MA2B1_FELCA</name>
<comment type="function">
    <text evidence="1">Necessary for the catabolism of N-linked carbohydrates released during glycoprotein turnover.</text>
</comment>
<comment type="catalytic activity">
    <reaction>
        <text>Hydrolysis of terminal, non-reducing alpha-D-mannose residues in alpha-D-mannosides.</text>
        <dbReference type="EC" id="3.2.1.24"/>
    </reaction>
</comment>
<comment type="cofactor">
    <cofactor evidence="1">
        <name>Zn(2+)</name>
        <dbReference type="ChEBI" id="CHEBI:29105"/>
    </cofactor>
    <text evidence="1">Binds 1 zinc ion per subunit.</text>
</comment>
<comment type="subcellular location">
    <subcellularLocation>
        <location>Lysosome</location>
    </subcellularLocation>
</comment>
<comment type="PTM">
    <text>Processed into 3 peptides of 72 kDa, 41 kDa and 12 kDa.</text>
</comment>
<comment type="disease">
    <text evidence="4">Defects in MAN2B1 are the cause of lysosomal alpha-mannosidosis (AM). AM is a lysosomal storage disease characterized by accumulation of unbranched oligosaccharide chains.</text>
</comment>
<comment type="similarity">
    <text evidence="5">Belongs to the glycosyl hydrolase 38 family.</text>
</comment>
<accession>O46432</accession>
<dbReference type="EC" id="3.2.1.24"/>
<dbReference type="EMBL" id="AF010191">
    <property type="protein sequence ID" value="AAB97672.1"/>
    <property type="molecule type" value="mRNA"/>
</dbReference>
<dbReference type="EMBL" id="AF010192">
    <property type="protein sequence ID" value="AAB97733.1"/>
    <property type="molecule type" value="Genomic_DNA"/>
</dbReference>
<dbReference type="PIR" id="T42219">
    <property type="entry name" value="T42219"/>
</dbReference>
<dbReference type="RefSeq" id="NP_001009222.1">
    <property type="nucleotide sequence ID" value="NM_001009222.1"/>
</dbReference>
<dbReference type="SMR" id="O46432"/>
<dbReference type="STRING" id="9685.ENSFCAP00000032748"/>
<dbReference type="CAZy" id="GH38">
    <property type="family name" value="Glycoside Hydrolase Family 38"/>
</dbReference>
<dbReference type="GlyCosmos" id="O46432">
    <property type="glycosylation" value="11 sites, No reported glycans"/>
</dbReference>
<dbReference type="PaxDb" id="9685-ENSFCAP00000020308"/>
<dbReference type="GeneID" id="493697"/>
<dbReference type="KEGG" id="fca:493697"/>
<dbReference type="CTD" id="4125"/>
<dbReference type="eggNOG" id="KOG1959">
    <property type="taxonomic scope" value="Eukaryota"/>
</dbReference>
<dbReference type="InParanoid" id="O46432"/>
<dbReference type="OrthoDB" id="2016903at2759"/>
<dbReference type="Proteomes" id="UP000011712">
    <property type="component" value="Unplaced"/>
</dbReference>
<dbReference type="GO" id="GO:0005764">
    <property type="term" value="C:lysosome"/>
    <property type="evidence" value="ECO:0000318"/>
    <property type="project" value="GO_Central"/>
</dbReference>
<dbReference type="GO" id="GO:0004559">
    <property type="term" value="F:alpha-mannosidase activity"/>
    <property type="evidence" value="ECO:0000318"/>
    <property type="project" value="GO_Central"/>
</dbReference>
<dbReference type="GO" id="GO:0030246">
    <property type="term" value="F:carbohydrate binding"/>
    <property type="evidence" value="ECO:0007669"/>
    <property type="project" value="InterPro"/>
</dbReference>
<dbReference type="GO" id="GO:0046872">
    <property type="term" value="F:metal ion binding"/>
    <property type="evidence" value="ECO:0007669"/>
    <property type="project" value="UniProtKB-KW"/>
</dbReference>
<dbReference type="GO" id="GO:0006013">
    <property type="term" value="P:mannose metabolic process"/>
    <property type="evidence" value="ECO:0007669"/>
    <property type="project" value="InterPro"/>
</dbReference>
<dbReference type="CDD" id="cd10810">
    <property type="entry name" value="GH38N_AMII_LAM_like"/>
    <property type="match status" value="1"/>
</dbReference>
<dbReference type="FunFam" id="1.20.1270.50:FF:000002">
    <property type="entry name" value="Alpha-mannosidase"/>
    <property type="match status" value="1"/>
</dbReference>
<dbReference type="FunFam" id="1.20.1270.50:FF:000003">
    <property type="entry name" value="Alpha-mannosidase"/>
    <property type="match status" value="1"/>
</dbReference>
<dbReference type="FunFam" id="2.60.40.1180:FF:000016">
    <property type="entry name" value="Alpha-mannosidase"/>
    <property type="match status" value="1"/>
</dbReference>
<dbReference type="FunFam" id="2.60.40.1360:FF:000002">
    <property type="entry name" value="Alpha-mannosidase"/>
    <property type="match status" value="1"/>
</dbReference>
<dbReference type="FunFam" id="2.70.98.30:FF:000003">
    <property type="entry name" value="Alpha-mannosidase"/>
    <property type="match status" value="1"/>
</dbReference>
<dbReference type="FunFam" id="3.20.110.10:FF:000001">
    <property type="entry name" value="Alpha-mannosidase"/>
    <property type="match status" value="1"/>
</dbReference>
<dbReference type="Gene3D" id="2.60.40.1360">
    <property type="match status" value="1"/>
</dbReference>
<dbReference type="Gene3D" id="3.20.110.10">
    <property type="entry name" value="Glycoside hydrolase 38, N terminal domain"/>
    <property type="match status" value="1"/>
</dbReference>
<dbReference type="Gene3D" id="1.20.1270.50">
    <property type="entry name" value="Glycoside hydrolase family 38, central domain"/>
    <property type="match status" value="2"/>
</dbReference>
<dbReference type="Gene3D" id="2.60.40.1180">
    <property type="entry name" value="Golgi alpha-mannosidase II"/>
    <property type="match status" value="1"/>
</dbReference>
<dbReference type="Gene3D" id="2.70.98.30">
    <property type="entry name" value="Golgi alpha-mannosidase II, domain 4"/>
    <property type="match status" value="1"/>
</dbReference>
<dbReference type="InterPro" id="IPR011013">
    <property type="entry name" value="Gal_mutarotase_sf_dom"/>
</dbReference>
<dbReference type="InterPro" id="IPR041147">
    <property type="entry name" value="GH38_C"/>
</dbReference>
<dbReference type="InterPro" id="IPR011330">
    <property type="entry name" value="Glyco_hydro/deAcase_b/a-brl"/>
</dbReference>
<dbReference type="InterPro" id="IPR011682">
    <property type="entry name" value="Glyco_hydro_38_C"/>
</dbReference>
<dbReference type="InterPro" id="IPR015341">
    <property type="entry name" value="Glyco_hydro_38_cen"/>
</dbReference>
<dbReference type="InterPro" id="IPR037094">
    <property type="entry name" value="Glyco_hydro_38_cen_sf"/>
</dbReference>
<dbReference type="InterPro" id="IPR000602">
    <property type="entry name" value="Glyco_hydro_38_N"/>
</dbReference>
<dbReference type="InterPro" id="IPR027291">
    <property type="entry name" value="Glyco_hydro_38_N_sf"/>
</dbReference>
<dbReference type="InterPro" id="IPR028995">
    <property type="entry name" value="Glyco_hydro_57/38_cen_sf"/>
</dbReference>
<dbReference type="InterPro" id="IPR013780">
    <property type="entry name" value="Glyco_hydro_b"/>
</dbReference>
<dbReference type="InterPro" id="IPR050843">
    <property type="entry name" value="Glycosyl_Hydrlase_38"/>
</dbReference>
<dbReference type="InterPro" id="IPR048534">
    <property type="entry name" value="Man2a1-like_dom"/>
</dbReference>
<dbReference type="PANTHER" id="PTHR11607">
    <property type="entry name" value="ALPHA-MANNOSIDASE"/>
    <property type="match status" value="1"/>
</dbReference>
<dbReference type="PANTHER" id="PTHR11607:SF3">
    <property type="entry name" value="LYSOSOMAL ALPHA-MANNOSIDASE"/>
    <property type="match status" value="1"/>
</dbReference>
<dbReference type="Pfam" id="PF09261">
    <property type="entry name" value="Alpha-mann_mid"/>
    <property type="match status" value="1"/>
</dbReference>
<dbReference type="Pfam" id="PF17677">
    <property type="entry name" value="Glyco_hydro38C2"/>
    <property type="match status" value="1"/>
</dbReference>
<dbReference type="Pfam" id="PF07748">
    <property type="entry name" value="Glyco_hydro_38C"/>
    <property type="match status" value="1"/>
</dbReference>
<dbReference type="Pfam" id="PF01074">
    <property type="entry name" value="Glyco_hydro_38N"/>
    <property type="match status" value="1"/>
</dbReference>
<dbReference type="Pfam" id="PF21260">
    <property type="entry name" value="Laman-like_dom"/>
    <property type="match status" value="1"/>
</dbReference>
<dbReference type="SMART" id="SM00872">
    <property type="entry name" value="Alpha-mann_mid"/>
    <property type="match status" value="1"/>
</dbReference>
<dbReference type="SUPFAM" id="SSF88688">
    <property type="entry name" value="Families 57/38 glycoside transferase middle domain"/>
    <property type="match status" value="1"/>
</dbReference>
<dbReference type="SUPFAM" id="SSF74650">
    <property type="entry name" value="Galactose mutarotase-like"/>
    <property type="match status" value="1"/>
</dbReference>
<dbReference type="SUPFAM" id="SSF88713">
    <property type="entry name" value="Glycoside hydrolase/deacetylase"/>
    <property type="match status" value="1"/>
</dbReference>
<proteinExistence type="evidence at transcript level"/>
<gene>
    <name type="primary">MAN2B1</name>
    <name type="synonym">MANB</name>
</gene>
<reference key="1">
    <citation type="journal article" date="1997" name="Biochem. J.">
        <title>Purification of feline lysosomal alpha-mannosidase, determination of its cDNA sequence and identification of a mutation causing alpha-mannosidosis in Persian cats.</title>
        <authorList>
            <person name="Berg T."/>
            <person name="Tollersrud O.-K."/>
            <person name="Walkley S.U."/>
            <person name="Siegel D."/>
            <person name="Nilssen O."/>
        </authorList>
    </citation>
    <scope>NUCLEOTIDE SEQUENCE [GENOMIC DNA / MRNA]</scope>
    <scope>DISEASE</scope>
</reference>
<protein>
    <recommendedName>
        <fullName>Lysosomal alpha-mannosidase</fullName>
        <shortName>Laman</shortName>
        <ecNumber>3.2.1.24</ecNumber>
    </recommendedName>
    <alternativeName>
        <fullName>Lysosomal acid alpha-mannosidase</fullName>
    </alternativeName>
    <alternativeName>
        <fullName>Mannosidase alpha class 2B member 1</fullName>
    </alternativeName>
    <alternativeName>
        <fullName>Mannosidase alpha-B</fullName>
    </alternativeName>
</protein>
<organism>
    <name type="scientific">Felis catus</name>
    <name type="common">Cat</name>
    <name type="synonym">Felis silvestris catus</name>
    <dbReference type="NCBI Taxonomy" id="9685"/>
    <lineage>
        <taxon>Eukaryota</taxon>
        <taxon>Metazoa</taxon>
        <taxon>Chordata</taxon>
        <taxon>Craniata</taxon>
        <taxon>Vertebrata</taxon>
        <taxon>Euteleostomi</taxon>
        <taxon>Mammalia</taxon>
        <taxon>Eutheria</taxon>
        <taxon>Laurasiatheria</taxon>
        <taxon>Carnivora</taxon>
        <taxon>Feliformia</taxon>
        <taxon>Felidae</taxon>
        <taxon>Felinae</taxon>
        <taxon>Felis</taxon>
    </lineage>
</organism>